<name>NADB_CLOAB</name>
<reference key="1">
    <citation type="journal article" date="2001" name="J. Bacteriol.">
        <title>Genome sequence and comparative analysis of the solvent-producing bacterium Clostridium acetobutylicum.</title>
        <authorList>
            <person name="Noelling J."/>
            <person name="Breton G."/>
            <person name="Omelchenko M.V."/>
            <person name="Makarova K.S."/>
            <person name="Zeng Q."/>
            <person name="Gibson R."/>
            <person name="Lee H.M."/>
            <person name="Dubois J."/>
            <person name="Qiu D."/>
            <person name="Hitti J."/>
            <person name="Wolf Y.I."/>
            <person name="Tatusov R.L."/>
            <person name="Sabathe F."/>
            <person name="Doucette-Stamm L.A."/>
            <person name="Soucaille P."/>
            <person name="Daly M.J."/>
            <person name="Bennett G.N."/>
            <person name="Koonin E.V."/>
            <person name="Smith D.R."/>
        </authorList>
    </citation>
    <scope>NUCLEOTIDE SEQUENCE [LARGE SCALE GENOMIC DNA]</scope>
    <source>
        <strain>ATCC 824 / DSM 792 / JCM 1419 / IAM 19013 / LMG 5710 / NBRC 13948 / NRRL B-527 / VKM B-1787 / 2291 / W</strain>
    </source>
</reference>
<organism>
    <name type="scientific">Clostridium acetobutylicum (strain ATCC 824 / DSM 792 / JCM 1419 / IAM 19013 / LMG 5710 / NBRC 13948 / NRRL B-527 / VKM B-1787 / 2291 / W)</name>
    <dbReference type="NCBI Taxonomy" id="272562"/>
    <lineage>
        <taxon>Bacteria</taxon>
        <taxon>Bacillati</taxon>
        <taxon>Bacillota</taxon>
        <taxon>Clostridia</taxon>
        <taxon>Eubacteriales</taxon>
        <taxon>Clostridiaceae</taxon>
        <taxon>Clostridium</taxon>
    </lineage>
</organism>
<proteinExistence type="inferred from homology"/>
<comment type="function">
    <text evidence="1">Catalyzes the oxidation of L-aspartate to iminoaspartate, the first step in the de novo biosynthesis of NAD(+).</text>
</comment>
<comment type="catalytic activity">
    <reaction evidence="1">
        <text>L-aspartate + O2 = iminosuccinate + H2O2</text>
        <dbReference type="Rhea" id="RHEA:25876"/>
        <dbReference type="ChEBI" id="CHEBI:15379"/>
        <dbReference type="ChEBI" id="CHEBI:16240"/>
        <dbReference type="ChEBI" id="CHEBI:29991"/>
        <dbReference type="ChEBI" id="CHEBI:77875"/>
        <dbReference type="EC" id="1.4.3.16"/>
    </reaction>
    <physiologicalReaction direction="left-to-right" evidence="1">
        <dbReference type="Rhea" id="RHEA:25877"/>
    </physiologicalReaction>
</comment>
<comment type="cofactor">
    <cofactor evidence="1">
        <name>FAD</name>
        <dbReference type="ChEBI" id="CHEBI:57692"/>
    </cofactor>
    <text evidence="1">Binds 1 FAD per subunit.</text>
</comment>
<comment type="pathway">
    <text evidence="1">Cofactor biosynthesis; NAD(+) biosynthesis; iminoaspartate from L-aspartate (oxidase route): step 1/1.</text>
</comment>
<comment type="subcellular location">
    <subcellularLocation>
        <location evidence="1">Cytoplasm</location>
    </subcellularLocation>
</comment>
<comment type="similarity">
    <text evidence="2">Belongs to the FAD-dependent oxidoreductase 2 family. NadB subfamily.</text>
</comment>
<feature type="chain" id="PRO_0000184382" description="L-aspartate oxidase">
    <location>
        <begin position="1"/>
        <end position="434"/>
    </location>
</feature>
<feature type="active site" description="Proton donor/acceptor" evidence="1">
    <location>
        <position position="268"/>
    </location>
</feature>
<feature type="binding site" evidence="1">
    <location>
        <begin position="12"/>
        <end position="15"/>
    </location>
    <ligand>
        <name>FAD</name>
        <dbReference type="ChEBI" id="CHEBI:57692"/>
    </ligand>
</feature>
<feature type="binding site" evidence="1">
    <location>
        <position position="34"/>
    </location>
    <ligand>
        <name>FAD</name>
        <dbReference type="ChEBI" id="CHEBI:57692"/>
    </ligand>
</feature>
<feature type="binding site" evidence="1">
    <location>
        <begin position="41"/>
        <end position="48"/>
    </location>
    <ligand>
        <name>FAD</name>
        <dbReference type="ChEBI" id="CHEBI:57692"/>
    </ligand>
</feature>
<feature type="binding site" evidence="1">
    <location>
        <position position="205"/>
    </location>
    <ligand>
        <name>FAD</name>
        <dbReference type="ChEBI" id="CHEBI:57692"/>
    </ligand>
</feature>
<feature type="binding site" evidence="1">
    <location>
        <position position="353"/>
    </location>
    <ligand>
        <name>FAD</name>
        <dbReference type="ChEBI" id="CHEBI:57692"/>
    </ligand>
</feature>
<feature type="binding site" evidence="1">
    <location>
        <begin position="369"/>
        <end position="370"/>
    </location>
    <ligand>
        <name>FAD</name>
        <dbReference type="ChEBI" id="CHEBI:57692"/>
    </ligand>
</feature>
<feature type="site" description="Important in orienting the L-aspartate substrate" evidence="1">
    <location>
        <position position="112"/>
    </location>
</feature>
<protein>
    <recommendedName>
        <fullName evidence="1">L-aspartate oxidase</fullName>
        <shortName evidence="1">LASPO</shortName>
        <ecNumber evidence="1">1.4.3.16</ecNumber>
    </recommendedName>
    <alternativeName>
        <fullName>Quinolinate synthase B</fullName>
    </alternativeName>
</protein>
<keyword id="KW-0963">Cytoplasm</keyword>
<keyword id="KW-0274">FAD</keyword>
<keyword id="KW-0285">Flavoprotein</keyword>
<keyword id="KW-0547">Nucleotide-binding</keyword>
<keyword id="KW-0560">Oxidoreductase</keyword>
<keyword id="KW-0662">Pyridine nucleotide biosynthesis</keyword>
<keyword id="KW-1185">Reference proteome</keyword>
<gene>
    <name type="primary">nadB</name>
    <name type="ordered locus">CA_C1024</name>
</gene>
<evidence type="ECO:0000250" key="1">
    <source>
        <dbReference type="UniProtKB" id="P10902"/>
    </source>
</evidence>
<evidence type="ECO:0000305" key="2"/>
<sequence>MNIQTDVLIIGTGVAGLYSALSLKNDIKVTMLTKSKACECNTYLAQGGISTALNKKDEPLFVDDTLRAGQYRNIKESVKILAAESKQNIDTLINFGMKFDKNEDGSLNYTREGAHSVNRIVHSTDETGKVVFETLYNEVKKRPNIEIIENIQVFDLISEDNICFGASALKNNTIYTFHSKATILASGGIGGLFKNSTNQRTLTADGIAMALRHNIDVRDLNYIQFHPTALYDSNTQEKKFLISESVRGEGGKLLSIENERFVDELLPRDVVANAIYKEEEKDNSKYVYLDITSMDADFITKRFPGIYKECLSRGLDITKNKIPVTPVQHYFMGGIKVDFNSLTSMKNLYACGEVSSTGVHGANRLASNSLLEGLVFSKRAAENINHSISFIERNEKNENLTLSDALSIIKCNRNIVINKFESILGEKKNELVNI</sequence>
<accession>Q97K95</accession>
<dbReference type="EC" id="1.4.3.16" evidence="1"/>
<dbReference type="EMBL" id="AE001437">
    <property type="protein sequence ID" value="AAK79000.1"/>
    <property type="molecule type" value="Genomic_DNA"/>
</dbReference>
<dbReference type="PIR" id="E97026">
    <property type="entry name" value="E97026"/>
</dbReference>
<dbReference type="RefSeq" id="NP_347660.1">
    <property type="nucleotide sequence ID" value="NC_003030.1"/>
</dbReference>
<dbReference type="RefSeq" id="WP_010964342.1">
    <property type="nucleotide sequence ID" value="NC_003030.1"/>
</dbReference>
<dbReference type="SMR" id="Q97K95"/>
<dbReference type="STRING" id="272562.CA_C1024"/>
<dbReference type="KEGG" id="cac:CA_C1024"/>
<dbReference type="PATRIC" id="fig|272562.8.peg.1232"/>
<dbReference type="eggNOG" id="COG0029">
    <property type="taxonomic scope" value="Bacteria"/>
</dbReference>
<dbReference type="HOGENOM" id="CLU_014312_3_1_9"/>
<dbReference type="OrthoDB" id="9806724at2"/>
<dbReference type="UniPathway" id="UPA00253">
    <property type="reaction ID" value="UER00326"/>
</dbReference>
<dbReference type="Proteomes" id="UP000000814">
    <property type="component" value="Chromosome"/>
</dbReference>
<dbReference type="GO" id="GO:0005737">
    <property type="term" value="C:cytoplasm"/>
    <property type="evidence" value="ECO:0007669"/>
    <property type="project" value="UniProtKB-SubCell"/>
</dbReference>
<dbReference type="GO" id="GO:0008734">
    <property type="term" value="F:L-aspartate oxidase activity"/>
    <property type="evidence" value="ECO:0007669"/>
    <property type="project" value="UniProtKB-EC"/>
</dbReference>
<dbReference type="GO" id="GO:0000166">
    <property type="term" value="F:nucleotide binding"/>
    <property type="evidence" value="ECO:0007669"/>
    <property type="project" value="UniProtKB-KW"/>
</dbReference>
<dbReference type="GO" id="GO:0033765">
    <property type="term" value="F:steroid dehydrogenase activity, acting on the CH-CH group of donors"/>
    <property type="evidence" value="ECO:0007669"/>
    <property type="project" value="UniProtKB-ARBA"/>
</dbReference>
<dbReference type="GO" id="GO:0034628">
    <property type="term" value="P:'de novo' NAD biosynthetic process from L-aspartate"/>
    <property type="evidence" value="ECO:0007669"/>
    <property type="project" value="TreeGrafter"/>
</dbReference>
<dbReference type="FunFam" id="3.90.700.10:FF:000002">
    <property type="entry name" value="L-aspartate oxidase"/>
    <property type="match status" value="1"/>
</dbReference>
<dbReference type="Gene3D" id="3.50.50.60">
    <property type="entry name" value="FAD/NAD(P)-binding domain"/>
    <property type="match status" value="1"/>
</dbReference>
<dbReference type="Gene3D" id="3.90.700.10">
    <property type="entry name" value="Succinate dehydrogenase/fumarate reductase flavoprotein, catalytic domain"/>
    <property type="match status" value="1"/>
</dbReference>
<dbReference type="InterPro" id="IPR003953">
    <property type="entry name" value="FAD-dep_OxRdtase_2_FAD-bd"/>
</dbReference>
<dbReference type="InterPro" id="IPR036188">
    <property type="entry name" value="FAD/NAD-bd_sf"/>
</dbReference>
<dbReference type="InterPro" id="IPR005288">
    <property type="entry name" value="NadB"/>
</dbReference>
<dbReference type="InterPro" id="IPR027477">
    <property type="entry name" value="Succ_DH/fumarate_Rdtase_cat_sf"/>
</dbReference>
<dbReference type="NCBIfam" id="NF004820">
    <property type="entry name" value="PRK06175.1"/>
    <property type="match status" value="1"/>
</dbReference>
<dbReference type="PANTHER" id="PTHR42716">
    <property type="entry name" value="L-ASPARTATE OXIDASE"/>
    <property type="match status" value="1"/>
</dbReference>
<dbReference type="PANTHER" id="PTHR42716:SF2">
    <property type="entry name" value="L-ASPARTATE OXIDASE, CHLOROPLASTIC"/>
    <property type="match status" value="1"/>
</dbReference>
<dbReference type="Pfam" id="PF00890">
    <property type="entry name" value="FAD_binding_2"/>
    <property type="match status" value="1"/>
</dbReference>
<dbReference type="PRINTS" id="PR00368">
    <property type="entry name" value="FADPNR"/>
</dbReference>
<dbReference type="SUPFAM" id="SSF51905">
    <property type="entry name" value="FAD/NAD(P)-binding domain"/>
    <property type="match status" value="1"/>
</dbReference>
<dbReference type="SUPFAM" id="SSF56425">
    <property type="entry name" value="Succinate dehydrogenase/fumarate reductase flavoprotein, catalytic domain"/>
    <property type="match status" value="1"/>
</dbReference>